<protein>
    <recommendedName>
        <fullName evidence="1">UPF0178 protein YaiI</fullName>
    </recommendedName>
</protein>
<name>YAII_ECOHS</name>
<comment type="similarity">
    <text evidence="1">Belongs to the UPF0178 family.</text>
</comment>
<gene>
    <name evidence="1" type="primary">yaiI</name>
    <name type="ordered locus">EcHS_A0455</name>
</gene>
<reference key="1">
    <citation type="journal article" date="2008" name="J. Bacteriol.">
        <title>The pangenome structure of Escherichia coli: comparative genomic analysis of E. coli commensal and pathogenic isolates.</title>
        <authorList>
            <person name="Rasko D.A."/>
            <person name="Rosovitz M.J."/>
            <person name="Myers G.S.A."/>
            <person name="Mongodin E.F."/>
            <person name="Fricke W.F."/>
            <person name="Gajer P."/>
            <person name="Crabtree J."/>
            <person name="Sebaihia M."/>
            <person name="Thomson N.R."/>
            <person name="Chaudhuri R."/>
            <person name="Henderson I.R."/>
            <person name="Sperandio V."/>
            <person name="Ravel J."/>
        </authorList>
    </citation>
    <scope>NUCLEOTIDE SEQUENCE [LARGE SCALE GENOMIC DNA]</scope>
    <source>
        <strain>HS</strain>
    </source>
</reference>
<sequence>MTIWVDADACPNVIKEILYRAAERMQMPLVLVANQSLRVPPSRFIRTLRVAAGFDVADNEIVRQCEAGDLVITADIPLAAEAIEKGAAALNPRGERYTPATIRERLTMRDFMDTLRASGIQTGGPDSLSQRDRQAFAAELEKWWLEVQRSRG</sequence>
<organism>
    <name type="scientific">Escherichia coli O9:H4 (strain HS)</name>
    <dbReference type="NCBI Taxonomy" id="331112"/>
    <lineage>
        <taxon>Bacteria</taxon>
        <taxon>Pseudomonadati</taxon>
        <taxon>Pseudomonadota</taxon>
        <taxon>Gammaproteobacteria</taxon>
        <taxon>Enterobacterales</taxon>
        <taxon>Enterobacteriaceae</taxon>
        <taxon>Escherichia</taxon>
    </lineage>
</organism>
<proteinExistence type="inferred from homology"/>
<accession>A7ZX37</accession>
<feature type="chain" id="PRO_1000060446" description="UPF0178 protein YaiI">
    <location>
        <begin position="1"/>
        <end position="152"/>
    </location>
</feature>
<dbReference type="EMBL" id="CP000802">
    <property type="protein sequence ID" value="ABV04841.1"/>
    <property type="molecule type" value="Genomic_DNA"/>
</dbReference>
<dbReference type="RefSeq" id="WP_000158159.1">
    <property type="nucleotide sequence ID" value="NC_009800.1"/>
</dbReference>
<dbReference type="KEGG" id="ecx:EcHS_A0455"/>
<dbReference type="HOGENOM" id="CLU_106619_2_1_6"/>
<dbReference type="CDD" id="cd18720">
    <property type="entry name" value="PIN_YqxD-like"/>
    <property type="match status" value="1"/>
</dbReference>
<dbReference type="HAMAP" id="MF_00489">
    <property type="entry name" value="UPF0178"/>
    <property type="match status" value="1"/>
</dbReference>
<dbReference type="InterPro" id="IPR003791">
    <property type="entry name" value="UPF0178"/>
</dbReference>
<dbReference type="NCBIfam" id="NF001095">
    <property type="entry name" value="PRK00124.1"/>
    <property type="match status" value="1"/>
</dbReference>
<dbReference type="PANTHER" id="PTHR35146">
    <property type="entry name" value="UPF0178 PROTEIN YAII"/>
    <property type="match status" value="1"/>
</dbReference>
<dbReference type="PANTHER" id="PTHR35146:SF1">
    <property type="entry name" value="UPF0178 PROTEIN YAII"/>
    <property type="match status" value="1"/>
</dbReference>
<dbReference type="Pfam" id="PF02639">
    <property type="entry name" value="DUF188"/>
    <property type="match status" value="1"/>
</dbReference>
<evidence type="ECO:0000255" key="1">
    <source>
        <dbReference type="HAMAP-Rule" id="MF_00489"/>
    </source>
</evidence>